<evidence type="ECO:0000256" key="1">
    <source>
        <dbReference type="SAM" id="MobiDB-lite"/>
    </source>
</evidence>
<evidence type="ECO:0000269" key="2">
    <source>
    </source>
</evidence>
<evidence type="ECO:0000269" key="3">
    <source>
    </source>
</evidence>
<evidence type="ECO:0000269" key="4">
    <source>
    </source>
</evidence>
<evidence type="ECO:0000303" key="5">
    <source>
    </source>
</evidence>
<evidence type="ECO:0000305" key="6"/>
<evidence type="ECO:0000305" key="7">
    <source>
    </source>
</evidence>
<evidence type="ECO:0000312" key="8">
    <source>
        <dbReference type="EMBL" id="EAL42866.1"/>
    </source>
</evidence>
<comment type="function">
    <text evidence="2 3">Plays a role in the adhesion to host cells (PubMed:1695007). Involved in the adhesion to host apoptotic cells thereby facilitating their phagocytosis (PubMed:18086807).</text>
</comment>
<comment type="subcellular location">
    <subcellularLocation>
        <location evidence="2 3 4">Cell membrane</location>
        <topology evidence="6">Peripheral membrane protein</topology>
        <orientation evidence="2 3 4">Extracellular side</orientation>
    </subcellularLocation>
    <text evidence="3 4">Appears to localize to some vesicle-like structures.</text>
</comment>
<comment type="developmental stage">
    <text evidence="2 3 4">Expressed in trophozoites (at protein level).</text>
</comment>
<comment type="PTM">
    <text evidence="4">Phosphorylated on serine residue(s).</text>
</comment>
<comment type="PTM">
    <text evidence="4">O-glycosylated; glycans consist of single N-acetylglucosamine residues.</text>
</comment>
<comment type="PTM">
    <text evidence="4">O-acylated; acyl group is probably palmitate, not myristate.</text>
</comment>
<name>SERA_ENTH1</name>
<protein>
    <recommendedName>
        <fullName>Serine-rich 25 kDa antigen protein</fullName>
    </recommendedName>
</protein>
<accession>P21138</accession>
<accession>A0A175K1J2</accession>
<accession>C4MBR8</accession>
<keyword id="KW-0130">Cell adhesion</keyword>
<keyword id="KW-1003">Cell membrane</keyword>
<keyword id="KW-0325">Glycoprotein</keyword>
<keyword id="KW-0449">Lipoprotein</keyword>
<keyword id="KW-0472">Membrane</keyword>
<keyword id="KW-0564">Palmitate</keyword>
<keyword id="KW-0597">Phosphoprotein</keyword>
<keyword id="KW-1185">Reference proteome</keyword>
<keyword id="KW-0677">Repeat</keyword>
<organism evidence="8">
    <name type="scientific">Entamoeba histolytica (strain ATCC 30459 / HM-1:IMSS / ABRM)</name>
    <dbReference type="NCBI Taxonomy" id="294381"/>
    <lineage>
        <taxon>Eukaryota</taxon>
        <taxon>Amoebozoa</taxon>
        <taxon>Evosea</taxon>
        <taxon>Archamoebae</taxon>
        <taxon>Mastigamoebida</taxon>
        <taxon>Entamoebidae</taxon>
        <taxon>Entamoeba</taxon>
    </lineage>
</organism>
<gene>
    <name evidence="5" type="primary">SREHP</name>
    <name evidence="8" type="ORF">EHI_116360</name>
</gene>
<sequence>MFAFLLFIAFTSATNIILDLDQEVKDTNIYGVFLKNEASPEKLEEAEEKEKSSSAKPESSSNEDNEDDEDEKASSSDNSESSSSDKPDNKPEASSSDKPEASSSDKPDNKPEASSSDKPDNKPEASSSDKPDNKPEASSSDKPDNKPEASSSDKPDNKPEASSTNKPEASSTNKPEASSTNKPEASSTNKPEASSTSNSNDKSGSSSDNDNNNLDAASSPFIVFCAIIIAIIF</sequence>
<dbReference type="EMBL" id="M34438">
    <property type="protein sequence ID" value="AAA74500.1"/>
    <property type="molecule type" value="mRNA"/>
</dbReference>
<dbReference type="EMBL" id="M80910">
    <property type="protein sequence ID" value="AAA29117.1"/>
    <property type="molecule type" value="Genomic_DNA"/>
</dbReference>
<dbReference type="EMBL" id="DS571976">
    <property type="protein sequence ID" value="EAL42866.1"/>
    <property type="molecule type" value="Genomic_DNA"/>
</dbReference>
<dbReference type="RefSeq" id="XP_648254.1">
    <property type="nucleotide sequence ID" value="XM_643162.2"/>
</dbReference>
<dbReference type="SMR" id="P21138"/>
<dbReference type="STRING" id="5759.C4MBR8"/>
<dbReference type="GlyConnect" id="555">
    <property type="glycosylation" value="1 O-GlcNAc glycan"/>
</dbReference>
<dbReference type="EnsemblProtists" id="GAT99588">
    <property type="protein sequence ID" value="GAT99588"/>
    <property type="gene ID" value="CL6EHI_116360"/>
</dbReference>
<dbReference type="EnsemblProtists" id="rna_EHI_116360-1">
    <property type="protein sequence ID" value="rna_EHI_116360-1"/>
    <property type="gene ID" value="EHI_116360"/>
</dbReference>
<dbReference type="GeneID" id="3402462"/>
<dbReference type="KEGG" id="ehi:EHI_116360"/>
<dbReference type="VEuPathDB" id="AmoebaDB:EHI5A_211690"/>
<dbReference type="VEuPathDB" id="AmoebaDB:EHI_116360"/>
<dbReference type="eggNOG" id="ENOG502RSM7">
    <property type="taxonomic scope" value="Eukaryota"/>
</dbReference>
<dbReference type="HOGENOM" id="CLU_1423947_0_0_1"/>
<dbReference type="OMA" id="ERHNQIR"/>
<dbReference type="OrthoDB" id="10636774at2759"/>
<dbReference type="Proteomes" id="UP000001926">
    <property type="component" value="Partially assembled WGS sequence"/>
</dbReference>
<dbReference type="GO" id="GO:0031232">
    <property type="term" value="C:extrinsic component of external side of plasma membrane"/>
    <property type="evidence" value="ECO:0000314"/>
    <property type="project" value="UniProtKB"/>
</dbReference>
<dbReference type="GO" id="GO:0044406">
    <property type="term" value="P:adhesion of symbiont to host"/>
    <property type="evidence" value="ECO:0000314"/>
    <property type="project" value="UniProtKB"/>
</dbReference>
<dbReference type="GO" id="GO:0007155">
    <property type="term" value="P:cell adhesion"/>
    <property type="evidence" value="ECO:0007669"/>
    <property type="project" value="UniProtKB-KW"/>
</dbReference>
<feature type="chain" id="PRO_0000097690" description="Serine-rich 25 kDa antigen protein">
    <location>
        <begin position="1"/>
        <end position="233"/>
    </location>
</feature>
<feature type="repeat" description="1-1" evidence="7">
    <location>
        <begin position="82"/>
        <end position="93"/>
    </location>
</feature>
<feature type="repeat" description="1-2" evidence="7">
    <location>
        <begin position="102"/>
        <end position="113"/>
    </location>
</feature>
<feature type="repeat" description="1-3" evidence="7">
    <location>
        <begin position="114"/>
        <end position="125"/>
    </location>
</feature>
<feature type="repeat" description="1-4" evidence="7">
    <location>
        <begin position="126"/>
        <end position="137"/>
    </location>
</feature>
<feature type="repeat" description="1-5" evidence="7">
    <location>
        <begin position="138"/>
        <end position="149"/>
    </location>
</feature>
<feature type="repeat" description="1-6" evidence="7">
    <location>
        <begin position="150"/>
        <end position="161"/>
    </location>
</feature>
<feature type="repeat" description="2-1" evidence="7">
    <location>
        <begin position="162"/>
        <end position="169"/>
    </location>
</feature>
<feature type="repeat" description="2-2" evidence="7">
    <location>
        <begin position="170"/>
        <end position="177"/>
    </location>
</feature>
<feature type="repeat" description="2-3" evidence="7">
    <location>
        <begin position="178"/>
        <end position="185"/>
    </location>
</feature>
<feature type="repeat" description="2-4" evidence="7">
    <location>
        <begin position="186"/>
        <end position="193"/>
    </location>
</feature>
<feature type="region of interest" description="Disordered" evidence="1">
    <location>
        <begin position="35"/>
        <end position="219"/>
    </location>
</feature>
<feature type="region of interest" description="6 X 12 AA tandem repeats of S-S-S-D-K-P-D-N-K-P-E-A" evidence="7">
    <location>
        <begin position="82"/>
        <end position="161"/>
    </location>
</feature>
<feature type="region of interest" description="4 X 8 AA tandem repeats of S-S-T-N-K-P-E-A" evidence="7">
    <location>
        <begin position="162"/>
        <end position="193"/>
    </location>
</feature>
<feature type="compositionally biased region" description="Basic and acidic residues" evidence="1">
    <location>
        <begin position="38"/>
        <end position="53"/>
    </location>
</feature>
<feature type="compositionally biased region" description="Acidic residues" evidence="1">
    <location>
        <begin position="61"/>
        <end position="71"/>
    </location>
</feature>
<feature type="compositionally biased region" description="Basic and acidic residues" evidence="1">
    <location>
        <begin position="83"/>
        <end position="159"/>
    </location>
</feature>
<feature type="compositionally biased region" description="Polar residues" evidence="1">
    <location>
        <begin position="160"/>
        <end position="192"/>
    </location>
</feature>
<feature type="compositionally biased region" description="Low complexity" evidence="1">
    <location>
        <begin position="193"/>
        <end position="219"/>
    </location>
</feature>
<proteinExistence type="evidence at protein level"/>
<reference key="1">
    <citation type="journal article" date="1990" name="Proc. Natl. Acad. Sci. U.S.A.">
        <title>Cloning and expression of a membrane antigen of Entamoeba histolytica possessing multiple tandem repeats.</title>
        <authorList>
            <person name="Stanley S.L. Jr."/>
            <person name="Becker A."/>
            <person name="Kunz-Jenkins C."/>
            <person name="Foster L."/>
            <person name="Li E."/>
        </authorList>
    </citation>
    <scope>NUCLEOTIDE SEQUENCE [MRNA]</scope>
    <scope>FUNCTION</scope>
    <scope>SUBCELLULAR LOCATION</scope>
    <scope>DEVELOPMENTAL STAGE</scope>
    <scope>REPEATS</scope>
    <source>
        <strain>ATCC 30459 / HM-1:IMSS / ABRM</strain>
    </source>
</reference>
<reference key="2">
    <citation type="journal article" date="1992" name="Mol. Biochem. Parasitol.">
        <title>Isolation and characterization of genomic clones encoding a serine-rich Entamoeba histolytica protein.</title>
        <authorList>
            <person name="Li E."/>
            <person name="Stanley S.L. Jr."/>
        </authorList>
    </citation>
    <scope>NUCLEOTIDE SEQUENCE [GENOMIC DNA]</scope>
</reference>
<reference evidence="8" key="3">
    <citation type="journal article" date="2005" name="Nature">
        <title>The genome of the protist parasite Entamoeba histolytica.</title>
        <authorList>
            <person name="Loftus B.J."/>
            <person name="Anderson I."/>
            <person name="Davies R."/>
            <person name="Alsmark U.C."/>
            <person name="Samuelson J."/>
            <person name="Amedeo P."/>
            <person name="Roncaglia P."/>
            <person name="Berriman M."/>
            <person name="Hirt R.P."/>
            <person name="Mann B.J."/>
            <person name="Nozaki T."/>
            <person name="Suh B."/>
            <person name="Pop M."/>
            <person name="Duchene M."/>
            <person name="Ackers J."/>
            <person name="Tannich E."/>
            <person name="Leippe M."/>
            <person name="Hofer M."/>
            <person name="Bruchhaus I."/>
            <person name="Willhoeft U."/>
            <person name="Bhattacharya A."/>
            <person name="Chillingworth T."/>
            <person name="Churcher C.M."/>
            <person name="Hance Z."/>
            <person name="Harris B."/>
            <person name="Harris D."/>
            <person name="Jagels K."/>
            <person name="Moule S."/>
            <person name="Mungall K.L."/>
            <person name="Ormond D."/>
            <person name="Squares R."/>
            <person name="Whitehead S."/>
            <person name="Quail M.A."/>
            <person name="Rabbinowitsch E."/>
            <person name="Norbertczak H."/>
            <person name="Price C."/>
            <person name="Wang Z."/>
            <person name="Guillen N."/>
            <person name="Gilchrist C."/>
            <person name="Stroup S.E."/>
            <person name="Bhattacharya S."/>
            <person name="Lohia A."/>
            <person name="Foster P.G."/>
            <person name="Sicheritz-Ponten T."/>
            <person name="Weber C."/>
            <person name="Singh U."/>
            <person name="Mukherjee C."/>
            <person name="El-Sayed N.M.A."/>
            <person name="Petri W.A."/>
            <person name="Clark C.G."/>
            <person name="Embley T.M."/>
            <person name="Barrell B.G."/>
            <person name="Fraser C.M."/>
            <person name="Hall N."/>
        </authorList>
    </citation>
    <scope>NUCLEOTIDE SEQUENCE [LARGE SCALE GENOMIC DNA]</scope>
    <source>
        <strain evidence="8">ATCC 30459 / HM-1:IMSS / ABRM</strain>
    </source>
</reference>
<reference key="4">
    <citation type="journal article" date="1995" name="J. Biol. Chem.">
        <title>The serine-rich Entamoeba histolytica protein is a phosphorylated membrane protein containing O-linked terminal N-acetylglucosamine residues.</title>
        <authorList>
            <person name="Stanley S.L. Jr."/>
            <person name="Tian K."/>
            <person name="Koester J.P."/>
            <person name="Li E."/>
        </authorList>
    </citation>
    <scope>SUBCELLULAR LOCATION</scope>
    <scope>DEVELOPMENTAL STAGE</scope>
    <scope>PHOSPHORYLATION</scope>
    <scope>GLYCOSYLATION</scope>
</reference>
<reference key="5">
    <citation type="journal article" date="2008" name="Infect. Immun.">
        <title>Participation of the serine-rich Entamoeba histolytica protein in amebic phagocytosis of apoptotic host cells.</title>
        <authorList>
            <person name="Teixeira J.E."/>
            <person name="Huston C.D."/>
        </authorList>
    </citation>
    <scope>FUNCTION</scope>
    <scope>SUBCELLULAR LOCATION</scope>
    <scope>DEVELOPMENTAL STAGE</scope>
    <scope>IDENTIFICATION BY MASS SPECTROMETRY</scope>
</reference>